<protein>
    <recommendedName>
        <fullName>Myo-inositol transporter 1</fullName>
    </recommendedName>
</protein>
<gene>
    <name type="primary">ITR1</name>
    <name type="ordered locus">YDR497C</name>
    <name type="ORF">D9719.3</name>
</gene>
<proteinExistence type="evidence at protein level"/>
<evidence type="ECO:0000255" key="1"/>
<evidence type="ECO:0000256" key="2">
    <source>
        <dbReference type="SAM" id="MobiDB-lite"/>
    </source>
</evidence>
<evidence type="ECO:0000269" key="3">
    <source>
    </source>
</evidence>
<evidence type="ECO:0000269" key="4">
    <source>
    </source>
</evidence>
<evidence type="ECO:0000305" key="5"/>
<evidence type="ECO:0000305" key="6">
    <source>
    </source>
</evidence>
<evidence type="ECO:0000305" key="7">
    <source>
    </source>
</evidence>
<evidence type="ECO:0007744" key="8">
    <source>
    </source>
</evidence>
<evidence type="ECO:0007744" key="9">
    <source>
    </source>
</evidence>
<evidence type="ECO:0007744" key="10">
    <source>
    </source>
</evidence>
<dbReference type="EMBL" id="D90352">
    <property type="protein sequence ID" value="BAA14366.1"/>
    <property type="molecule type" value="Genomic_DNA"/>
</dbReference>
<dbReference type="EMBL" id="U33057">
    <property type="protein sequence ID" value="AAB64939.1"/>
    <property type="molecule type" value="Genomic_DNA"/>
</dbReference>
<dbReference type="EMBL" id="BK006938">
    <property type="protein sequence ID" value="DAA12329.1"/>
    <property type="molecule type" value="Genomic_DNA"/>
</dbReference>
<dbReference type="PIR" id="S69555">
    <property type="entry name" value="S69555"/>
</dbReference>
<dbReference type="RefSeq" id="NP_010785.1">
    <property type="nucleotide sequence ID" value="NM_001180805.1"/>
</dbReference>
<dbReference type="SMR" id="P30605"/>
<dbReference type="BioGRID" id="32548">
    <property type="interactions" value="134"/>
</dbReference>
<dbReference type="DIP" id="DIP-7406N"/>
<dbReference type="FunCoup" id="P30605">
    <property type="interactions" value="1522"/>
</dbReference>
<dbReference type="IntAct" id="P30605">
    <property type="interactions" value="28"/>
</dbReference>
<dbReference type="MINT" id="P30605"/>
<dbReference type="STRING" id="4932.YDR497C"/>
<dbReference type="TCDB" id="2.A.1.1.8">
    <property type="family name" value="the major facilitator superfamily (mfs)"/>
</dbReference>
<dbReference type="GlyCosmos" id="P30605">
    <property type="glycosylation" value="1 site, No reported glycans"/>
</dbReference>
<dbReference type="GlyGen" id="P30605">
    <property type="glycosylation" value="1 site"/>
</dbReference>
<dbReference type="iPTMnet" id="P30605"/>
<dbReference type="PaxDb" id="4932-YDR497C"/>
<dbReference type="PeptideAtlas" id="P30605"/>
<dbReference type="TopDownProteomics" id="P30605"/>
<dbReference type="EnsemblFungi" id="YDR497C_mRNA">
    <property type="protein sequence ID" value="YDR497C"/>
    <property type="gene ID" value="YDR497C"/>
</dbReference>
<dbReference type="GeneID" id="852108"/>
<dbReference type="KEGG" id="sce:YDR497C"/>
<dbReference type="AGR" id="SGD:S000002905"/>
<dbReference type="SGD" id="S000002905">
    <property type="gene designation" value="ITR1"/>
</dbReference>
<dbReference type="VEuPathDB" id="FungiDB:YDR497C"/>
<dbReference type="eggNOG" id="KOG0254">
    <property type="taxonomic scope" value="Eukaryota"/>
</dbReference>
<dbReference type="GeneTree" id="ENSGT00940000155870"/>
<dbReference type="HOGENOM" id="CLU_001265_30_5_1"/>
<dbReference type="InParanoid" id="P30605"/>
<dbReference type="OMA" id="TWVNMMV"/>
<dbReference type="OrthoDB" id="6339427at2759"/>
<dbReference type="BioCyc" id="YEAST:G3O-30020-MONOMER"/>
<dbReference type="Reactome" id="R-SCE-429593">
    <property type="pathway name" value="Inositol transporters"/>
</dbReference>
<dbReference type="BioGRID-ORCS" id="852108">
    <property type="hits" value="9 hits in 10 CRISPR screens"/>
</dbReference>
<dbReference type="PRO" id="PR:P30605"/>
<dbReference type="Proteomes" id="UP000002311">
    <property type="component" value="Chromosome IV"/>
</dbReference>
<dbReference type="RNAct" id="P30605">
    <property type="molecule type" value="protein"/>
</dbReference>
<dbReference type="GO" id="GO:0071944">
    <property type="term" value="C:cell periphery"/>
    <property type="evidence" value="ECO:0007005"/>
    <property type="project" value="SGD"/>
</dbReference>
<dbReference type="GO" id="GO:0000324">
    <property type="term" value="C:fungal-type vacuole"/>
    <property type="evidence" value="ECO:0007005"/>
    <property type="project" value="SGD"/>
</dbReference>
<dbReference type="GO" id="GO:0000329">
    <property type="term" value="C:fungal-type vacuole membrane"/>
    <property type="evidence" value="ECO:0007005"/>
    <property type="project" value="SGD"/>
</dbReference>
<dbReference type="GO" id="GO:0016020">
    <property type="term" value="C:membrane"/>
    <property type="evidence" value="ECO:0000318"/>
    <property type="project" value="GO_Central"/>
</dbReference>
<dbReference type="GO" id="GO:0005886">
    <property type="term" value="C:plasma membrane"/>
    <property type="evidence" value="ECO:0000314"/>
    <property type="project" value="SGD"/>
</dbReference>
<dbReference type="GO" id="GO:0005365">
    <property type="term" value="F:myo-inositol transmembrane transporter activity"/>
    <property type="evidence" value="ECO:0000315"/>
    <property type="project" value="SGD"/>
</dbReference>
<dbReference type="GO" id="GO:0005366">
    <property type="term" value="F:myo-inositol:proton symporter activity"/>
    <property type="evidence" value="ECO:0000318"/>
    <property type="project" value="GO_Central"/>
</dbReference>
<dbReference type="GO" id="GO:1904679">
    <property type="term" value="P:myo-inositol import across plasma membrane"/>
    <property type="evidence" value="ECO:0000318"/>
    <property type="project" value="GO_Central"/>
</dbReference>
<dbReference type="GO" id="GO:0015798">
    <property type="term" value="P:myo-inositol transport"/>
    <property type="evidence" value="ECO:0000315"/>
    <property type="project" value="SGD"/>
</dbReference>
<dbReference type="GO" id="GO:0007124">
    <property type="term" value="P:pseudohyphal growth"/>
    <property type="evidence" value="ECO:0000315"/>
    <property type="project" value="SGD"/>
</dbReference>
<dbReference type="GO" id="GO:0055085">
    <property type="term" value="P:transmembrane transport"/>
    <property type="evidence" value="ECO:0000315"/>
    <property type="project" value="SGD"/>
</dbReference>
<dbReference type="CDD" id="cd17360">
    <property type="entry name" value="MFS_HMIT_like"/>
    <property type="match status" value="1"/>
</dbReference>
<dbReference type="FunFam" id="1.20.1250.20:FF:000073">
    <property type="entry name" value="MFS myo-inositol transporter, putative"/>
    <property type="match status" value="1"/>
</dbReference>
<dbReference type="Gene3D" id="1.20.1250.20">
    <property type="entry name" value="MFS general substrate transporter like domains"/>
    <property type="match status" value="1"/>
</dbReference>
<dbReference type="InterPro" id="IPR020846">
    <property type="entry name" value="MFS_dom"/>
</dbReference>
<dbReference type="InterPro" id="IPR005828">
    <property type="entry name" value="MFS_sugar_transport-like"/>
</dbReference>
<dbReference type="InterPro" id="IPR036259">
    <property type="entry name" value="MFS_trans_sf"/>
</dbReference>
<dbReference type="InterPro" id="IPR050814">
    <property type="entry name" value="Myo-inositol_Transporter"/>
</dbReference>
<dbReference type="InterPro" id="IPR003663">
    <property type="entry name" value="Sugar/inositol_transpt"/>
</dbReference>
<dbReference type="InterPro" id="IPR005829">
    <property type="entry name" value="Sugar_transporter_CS"/>
</dbReference>
<dbReference type="NCBIfam" id="TIGR00879">
    <property type="entry name" value="SP"/>
    <property type="match status" value="1"/>
</dbReference>
<dbReference type="PANTHER" id="PTHR48020">
    <property type="entry name" value="PROTON MYO-INOSITOL COTRANSPORTER"/>
    <property type="match status" value="1"/>
</dbReference>
<dbReference type="PANTHER" id="PTHR48020:SF12">
    <property type="entry name" value="PROTON MYO-INOSITOL COTRANSPORTER"/>
    <property type="match status" value="1"/>
</dbReference>
<dbReference type="Pfam" id="PF00083">
    <property type="entry name" value="Sugar_tr"/>
    <property type="match status" value="1"/>
</dbReference>
<dbReference type="PRINTS" id="PR00171">
    <property type="entry name" value="SUGRTRNSPORT"/>
</dbReference>
<dbReference type="SUPFAM" id="SSF103473">
    <property type="entry name" value="MFS general substrate transporter"/>
    <property type="match status" value="1"/>
</dbReference>
<dbReference type="PROSITE" id="PS50850">
    <property type="entry name" value="MFS"/>
    <property type="match status" value="1"/>
</dbReference>
<dbReference type="PROSITE" id="PS00216">
    <property type="entry name" value="SUGAR_TRANSPORT_1"/>
    <property type="match status" value="2"/>
</dbReference>
<dbReference type="PROSITE" id="PS00217">
    <property type="entry name" value="SUGAR_TRANSPORT_2"/>
    <property type="match status" value="1"/>
</dbReference>
<organism>
    <name type="scientific">Saccharomyces cerevisiae (strain ATCC 204508 / S288c)</name>
    <name type="common">Baker's yeast</name>
    <dbReference type="NCBI Taxonomy" id="559292"/>
    <lineage>
        <taxon>Eukaryota</taxon>
        <taxon>Fungi</taxon>
        <taxon>Dikarya</taxon>
        <taxon>Ascomycota</taxon>
        <taxon>Saccharomycotina</taxon>
        <taxon>Saccharomycetes</taxon>
        <taxon>Saccharomycetales</taxon>
        <taxon>Saccharomycetaceae</taxon>
        <taxon>Saccharomyces</taxon>
    </lineage>
</organism>
<accession>P30605</accession>
<accession>D6VTB9</accession>
<sequence>MGIHIPYLTSKTSQSNVGDAVGNADSVEFNSEHDSPSKRGKITLESHEIQRAPASDDEDRIQIKPVNDEDDTSVMITFNQSLSPFIITLTFVASISGFMFGYDTGYISSALISIGTDLDHKVLTYGEKEIVTAATSLGALITSIFAGTAADIFGRKRCLMGSNLMFVIGAILQVSAHTFWQMAVGRLIMGFGVGIGSLIAPLFISEIAPKMIRGRLTVINSLWLTGGQLVAYGCGAGLNYVNNGWRILVGLSLIPTAVQFTCLCFLPDTPRYYVMKGDLARATEVLKRSYTDTSEEIIERKVEELVTLNQSIPGKNVPEKVWNTIKELHTVPSNLRALIIGCGLQAIQQFTGWNSLMYFSGTIFETVGFKNSSAVSIIVSGTNFIFTLVAFFSIDKIGRRTILLIGLPGMTMALVVCSIAFHFLGIKFDGAVAVVVSSGFSSWGIVIIVFIIVFAAFYALGIGTVPWQQSELFPQNVRGIGTSYATATNWAGSLVIASTFLTMLQNITPAGTFAFFAGLSCLSTIFCYFCYPELSGLELEEVQTILKDGFNIKASKALAKKRKQQVARVHELKYEPTQEIIEDI</sequence>
<keyword id="KW-1003">Cell membrane</keyword>
<keyword id="KW-0325">Glycoprotein</keyword>
<keyword id="KW-1017">Isopeptide bond</keyword>
<keyword id="KW-0472">Membrane</keyword>
<keyword id="KW-0597">Phosphoprotein</keyword>
<keyword id="KW-1185">Reference proteome</keyword>
<keyword id="KW-0812">Transmembrane</keyword>
<keyword id="KW-1133">Transmembrane helix</keyword>
<keyword id="KW-0813">Transport</keyword>
<keyword id="KW-0832">Ubl conjugation</keyword>
<name>ITR1_YEAST</name>
<feature type="chain" id="PRO_0000050455" description="Myo-inositol transporter 1">
    <location>
        <begin position="1"/>
        <end position="584"/>
    </location>
</feature>
<feature type="topological domain" description="Cytoplasmic" evidence="1">
    <location>
        <begin position="1"/>
        <end position="81"/>
    </location>
</feature>
<feature type="transmembrane region" description="Helical; Name=1" evidence="1">
    <location>
        <begin position="82"/>
        <end position="102"/>
    </location>
</feature>
<feature type="topological domain" description="Extracellular" evidence="1">
    <location>
        <begin position="103"/>
        <end position="129"/>
    </location>
</feature>
<feature type="transmembrane region" description="Helical; Name=2" evidence="1">
    <location>
        <begin position="130"/>
        <end position="150"/>
    </location>
</feature>
<feature type="topological domain" description="Cytoplasmic" evidence="1">
    <location>
        <begin position="151"/>
        <end position="163"/>
    </location>
</feature>
<feature type="transmembrane region" description="Helical; Name=3" evidence="1">
    <location>
        <begin position="164"/>
        <end position="184"/>
    </location>
</feature>
<feature type="topological domain" description="Extracellular" evidence="1">
    <location>
        <begin position="185"/>
        <end position="186"/>
    </location>
</feature>
<feature type="transmembrane region" description="Helical; Name=4" evidence="1">
    <location>
        <begin position="187"/>
        <end position="207"/>
    </location>
</feature>
<feature type="topological domain" description="Cytoplasmic" evidence="1">
    <location>
        <begin position="208"/>
        <end position="215"/>
    </location>
</feature>
<feature type="transmembrane region" description="Helical; Name=5" evidence="1">
    <location>
        <begin position="216"/>
        <end position="236"/>
    </location>
</feature>
<feature type="topological domain" description="Extracellular" evidence="1">
    <location>
        <begin position="237"/>
        <end position="246"/>
    </location>
</feature>
<feature type="transmembrane region" description="Helical; Name=6" evidence="1">
    <location>
        <begin position="247"/>
        <end position="267"/>
    </location>
</feature>
<feature type="topological domain" description="Cytoplasmic" evidence="1">
    <location>
        <begin position="268"/>
        <end position="349"/>
    </location>
</feature>
<feature type="transmembrane region" description="Helical; Name=7" evidence="1">
    <location>
        <begin position="350"/>
        <end position="370"/>
    </location>
</feature>
<feature type="topological domain" description="Extracellular" evidence="1">
    <location>
        <begin position="371"/>
        <end position="376"/>
    </location>
</feature>
<feature type="transmembrane region" description="Helical; Name=8" evidence="1">
    <location>
        <begin position="377"/>
        <end position="397"/>
    </location>
</feature>
<feature type="topological domain" description="Cytoplasmic" evidence="1">
    <location>
        <begin position="398"/>
        <end position="400"/>
    </location>
</feature>
<feature type="transmembrane region" description="Helical; Name=9" evidence="1">
    <location>
        <begin position="401"/>
        <end position="421"/>
    </location>
</feature>
<feature type="topological domain" description="Extracellular" evidence="1">
    <location>
        <begin position="422"/>
        <end position="441"/>
    </location>
</feature>
<feature type="transmembrane region" description="Helical; Name=10" evidence="1">
    <location>
        <begin position="442"/>
        <end position="462"/>
    </location>
</feature>
<feature type="topological domain" description="Cytoplasmic" evidence="1">
    <location>
        <begin position="463"/>
        <end position="486"/>
    </location>
</feature>
<feature type="transmembrane region" description="Helical; Name=11" evidence="1">
    <location>
        <begin position="487"/>
        <end position="507"/>
    </location>
</feature>
<feature type="topological domain" description="Extracellular" evidence="1">
    <location>
        <begin position="508"/>
        <end position="510"/>
    </location>
</feature>
<feature type="transmembrane region" description="Helical; Name=12" evidence="1">
    <location>
        <begin position="511"/>
        <end position="531"/>
    </location>
</feature>
<feature type="topological domain" description="Cytoplasmic" evidence="1">
    <location>
        <begin position="532"/>
        <end position="584"/>
    </location>
</feature>
<feature type="region of interest" description="Disordered" evidence="2">
    <location>
        <begin position="13"/>
        <end position="42"/>
    </location>
</feature>
<feature type="compositionally biased region" description="Basic and acidic residues" evidence="2">
    <location>
        <begin position="30"/>
        <end position="42"/>
    </location>
</feature>
<feature type="modified residue" description="Phosphothreonine" evidence="9">
    <location>
        <position position="12"/>
    </location>
</feature>
<feature type="modified residue" description="Phosphoserine" evidence="9">
    <location>
        <position position="26"/>
    </location>
</feature>
<feature type="modified residue" description="Phosphoserine" evidence="9">
    <location>
        <position position="31"/>
    </location>
</feature>
<feature type="modified residue" description="Phosphoserine" evidence="9">
    <location>
        <position position="35"/>
    </location>
</feature>
<feature type="modified residue" description="Phosphoserine" evidence="9">
    <location>
        <position position="37"/>
    </location>
</feature>
<feature type="modified residue" description="Phosphoserine" evidence="8 9">
    <location>
        <position position="46"/>
    </location>
</feature>
<feature type="glycosylation site" description="N-linked (GlcNAc...) asparagine" evidence="1">
    <location>
        <position position="371"/>
    </location>
</feature>
<feature type="cross-link" description="Glycyl lysine isopeptide (Lys-Gly) (interchain with G-Cter in ubiquitin)" evidence="10">
    <location>
        <position position="573"/>
    </location>
</feature>
<feature type="sequence conflict" description="In Ref. 1; BAA14366." evidence="5" ref="1">
    <original>TL</original>
    <variation>HI</variation>
    <location>
        <begin position="43"/>
        <end position="44"/>
    </location>
</feature>
<reference key="1">
    <citation type="journal article" date="1991" name="J. Biol. Chem.">
        <title>Isolation and characterization of two distinct myo-inositol transporter genes of Saccharomyces cerevisiae.</title>
        <authorList>
            <person name="Nikawa J."/>
            <person name="Tsukagoshi Y."/>
            <person name="Yamashita S."/>
        </authorList>
    </citation>
    <scope>NUCLEOTIDE SEQUENCE [GENOMIC DNA]</scope>
    <scope>FUNCTION</scope>
</reference>
<reference key="2">
    <citation type="journal article" date="1997" name="Nature">
        <title>The nucleotide sequence of Saccharomyces cerevisiae chromosome IV.</title>
        <authorList>
            <person name="Jacq C."/>
            <person name="Alt-Moerbe J."/>
            <person name="Andre B."/>
            <person name="Arnold W."/>
            <person name="Bahr A."/>
            <person name="Ballesta J.P.G."/>
            <person name="Bargues M."/>
            <person name="Baron L."/>
            <person name="Becker A."/>
            <person name="Biteau N."/>
            <person name="Bloecker H."/>
            <person name="Blugeon C."/>
            <person name="Boskovic J."/>
            <person name="Brandt P."/>
            <person name="Brueckner M."/>
            <person name="Buitrago M.J."/>
            <person name="Coster F."/>
            <person name="Delaveau T."/>
            <person name="del Rey F."/>
            <person name="Dujon B."/>
            <person name="Eide L.G."/>
            <person name="Garcia-Cantalejo J.M."/>
            <person name="Goffeau A."/>
            <person name="Gomez-Peris A."/>
            <person name="Granotier C."/>
            <person name="Hanemann V."/>
            <person name="Hankeln T."/>
            <person name="Hoheisel J.D."/>
            <person name="Jaeger W."/>
            <person name="Jimenez A."/>
            <person name="Jonniaux J.-L."/>
            <person name="Kraemer C."/>
            <person name="Kuester H."/>
            <person name="Laamanen P."/>
            <person name="Legros Y."/>
            <person name="Louis E.J."/>
            <person name="Moeller-Rieker S."/>
            <person name="Monnet A."/>
            <person name="Moro M."/>
            <person name="Mueller-Auer S."/>
            <person name="Nussbaumer B."/>
            <person name="Paricio N."/>
            <person name="Paulin L."/>
            <person name="Perea J."/>
            <person name="Perez-Alonso M."/>
            <person name="Perez-Ortin J.E."/>
            <person name="Pohl T.M."/>
            <person name="Prydz H."/>
            <person name="Purnelle B."/>
            <person name="Rasmussen S.W."/>
            <person name="Remacha M.A."/>
            <person name="Revuelta J.L."/>
            <person name="Rieger M."/>
            <person name="Salom D."/>
            <person name="Saluz H.P."/>
            <person name="Saiz J.E."/>
            <person name="Saren A.-M."/>
            <person name="Schaefer M."/>
            <person name="Scharfe M."/>
            <person name="Schmidt E.R."/>
            <person name="Schneider C."/>
            <person name="Scholler P."/>
            <person name="Schwarz S."/>
            <person name="Soler-Mira A."/>
            <person name="Urrestarazu L.A."/>
            <person name="Verhasselt P."/>
            <person name="Vissers S."/>
            <person name="Voet M."/>
            <person name="Volckaert G."/>
            <person name="Wagner G."/>
            <person name="Wambutt R."/>
            <person name="Wedler E."/>
            <person name="Wedler H."/>
            <person name="Woelfl S."/>
            <person name="Harris D.E."/>
            <person name="Bowman S."/>
            <person name="Brown D."/>
            <person name="Churcher C.M."/>
            <person name="Connor R."/>
            <person name="Dedman K."/>
            <person name="Gentles S."/>
            <person name="Hamlin N."/>
            <person name="Hunt S."/>
            <person name="Jones L."/>
            <person name="McDonald S."/>
            <person name="Murphy L.D."/>
            <person name="Niblett D."/>
            <person name="Odell C."/>
            <person name="Oliver K."/>
            <person name="Rajandream M.A."/>
            <person name="Richards C."/>
            <person name="Shore L."/>
            <person name="Walsh S.V."/>
            <person name="Barrell B.G."/>
            <person name="Dietrich F.S."/>
            <person name="Mulligan J.T."/>
            <person name="Allen E."/>
            <person name="Araujo R."/>
            <person name="Aviles E."/>
            <person name="Berno A."/>
            <person name="Carpenter J."/>
            <person name="Chen E."/>
            <person name="Cherry J.M."/>
            <person name="Chung E."/>
            <person name="Duncan M."/>
            <person name="Hunicke-Smith S."/>
            <person name="Hyman R.W."/>
            <person name="Komp C."/>
            <person name="Lashkari D."/>
            <person name="Lew H."/>
            <person name="Lin D."/>
            <person name="Mosedale D."/>
            <person name="Nakahara K."/>
            <person name="Namath A."/>
            <person name="Oefner P."/>
            <person name="Oh C."/>
            <person name="Petel F.X."/>
            <person name="Roberts D."/>
            <person name="Schramm S."/>
            <person name="Schroeder M."/>
            <person name="Shogren T."/>
            <person name="Shroff N."/>
            <person name="Winant A."/>
            <person name="Yelton M.A."/>
            <person name="Botstein D."/>
            <person name="Davis R.W."/>
            <person name="Johnston M."/>
            <person name="Andrews S."/>
            <person name="Brinkman R."/>
            <person name="Cooper J."/>
            <person name="Ding H."/>
            <person name="Du Z."/>
            <person name="Favello A."/>
            <person name="Fulton L."/>
            <person name="Gattung S."/>
            <person name="Greco T."/>
            <person name="Hallsworth K."/>
            <person name="Hawkins J."/>
            <person name="Hillier L.W."/>
            <person name="Jier M."/>
            <person name="Johnson D."/>
            <person name="Johnston L."/>
            <person name="Kirsten J."/>
            <person name="Kucaba T."/>
            <person name="Langston Y."/>
            <person name="Latreille P."/>
            <person name="Le T."/>
            <person name="Mardis E."/>
            <person name="Menezes S."/>
            <person name="Miller N."/>
            <person name="Nhan M."/>
            <person name="Pauley A."/>
            <person name="Peluso D."/>
            <person name="Rifkin L."/>
            <person name="Riles L."/>
            <person name="Taich A."/>
            <person name="Trevaskis E."/>
            <person name="Vignati D."/>
            <person name="Wilcox L."/>
            <person name="Wohldman P."/>
            <person name="Vaudin M."/>
            <person name="Wilson R."/>
            <person name="Waterston R."/>
            <person name="Albermann K."/>
            <person name="Hani J."/>
            <person name="Heumann K."/>
            <person name="Kleine K."/>
            <person name="Mewes H.-W."/>
            <person name="Zollner A."/>
            <person name="Zaccaria P."/>
        </authorList>
    </citation>
    <scope>NUCLEOTIDE SEQUENCE [LARGE SCALE GENOMIC DNA]</scope>
    <source>
        <strain>ATCC 204508 / S288c</strain>
    </source>
</reference>
<reference key="3">
    <citation type="journal article" date="2014" name="G3 (Bethesda)">
        <title>The reference genome sequence of Saccharomyces cerevisiae: Then and now.</title>
        <authorList>
            <person name="Engel S.R."/>
            <person name="Dietrich F.S."/>
            <person name="Fisk D.G."/>
            <person name="Binkley G."/>
            <person name="Balakrishnan R."/>
            <person name="Costanzo M.C."/>
            <person name="Dwight S.S."/>
            <person name="Hitz B.C."/>
            <person name="Karra K."/>
            <person name="Nash R.S."/>
            <person name="Weng S."/>
            <person name="Wong E.D."/>
            <person name="Lloyd P."/>
            <person name="Skrzypek M.S."/>
            <person name="Miyasato S.R."/>
            <person name="Simison M."/>
            <person name="Cherry J.M."/>
        </authorList>
    </citation>
    <scope>GENOME REANNOTATION</scope>
    <source>
        <strain>ATCC 204508 / S288c</strain>
    </source>
</reference>
<reference key="4">
    <citation type="journal article" date="2003" name="J. Biosci. Bioeng.">
        <title>Mutational analysis and localization of the inositol transporters of Saccharomyces cerevisiae.</title>
        <authorList>
            <person name="Miyashita M."/>
            <person name="Shugyo M."/>
            <person name="Nikawa J."/>
        </authorList>
    </citation>
    <scope>FUNCTION</scope>
    <scope>CATALYTIC ACTIVITY</scope>
    <scope>SUBCELLULAR LOCATION</scope>
</reference>
<reference key="5">
    <citation type="journal article" date="2003" name="Nat. Biotechnol.">
        <title>A proteomics approach to understanding protein ubiquitination.</title>
        <authorList>
            <person name="Peng J."/>
            <person name="Schwartz D."/>
            <person name="Elias J.E."/>
            <person name="Thoreen C.C."/>
            <person name="Cheng D."/>
            <person name="Marsischky G."/>
            <person name="Roelofs J."/>
            <person name="Finley D."/>
            <person name="Gygi S.P."/>
        </authorList>
    </citation>
    <scope>UBIQUITINATION [LARGE SCALE ANALYSIS] AT LYS-573</scope>
    <scope>IDENTIFICATION BY MASS SPECTROMETRY</scope>
    <source>
        <strain>SUB592</strain>
    </source>
</reference>
<reference key="6">
    <citation type="journal article" date="2003" name="Proc. Natl. Acad. Sci. U.S.A.">
        <title>A subset of membrane-associated proteins is ubiquitinated in response to mutations in the endoplasmic reticulum degradation machinery.</title>
        <authorList>
            <person name="Hitchcock A.L."/>
            <person name="Auld K."/>
            <person name="Gygi S.P."/>
            <person name="Silver P.A."/>
        </authorList>
    </citation>
    <scope>UBIQUITINATION [LARGE SCALE ANALYSIS] AT LYS-573</scope>
    <scope>IDENTIFICATION BY MASS SPECTROMETRY</scope>
</reference>
<reference key="7">
    <citation type="journal article" date="2005" name="Mol. Cell. Proteomics">
        <title>Quantitative phosphoproteomics applied to the yeast pheromone signaling pathway.</title>
        <authorList>
            <person name="Gruhler A."/>
            <person name="Olsen J.V."/>
            <person name="Mohammed S."/>
            <person name="Mortensen P."/>
            <person name="Faergeman N.J."/>
            <person name="Mann M."/>
            <person name="Jensen O.N."/>
        </authorList>
    </citation>
    <scope>PHOSPHORYLATION [LARGE SCALE ANALYSIS] AT SER-46</scope>
    <scope>IDENTIFICATION BY MASS SPECTROMETRY [LARGE SCALE ANALYSIS]</scope>
    <source>
        <strain>YAL6B</strain>
    </source>
</reference>
<reference key="8">
    <citation type="journal article" date="2006" name="Proc. Natl. Acad. Sci. U.S.A.">
        <title>A global topology map of the Saccharomyces cerevisiae membrane proteome.</title>
        <authorList>
            <person name="Kim H."/>
            <person name="Melen K."/>
            <person name="Oesterberg M."/>
            <person name="von Heijne G."/>
        </authorList>
    </citation>
    <scope>TOPOLOGY [LARGE SCALE ANALYSIS]</scope>
    <source>
        <strain>ATCC 208353 / W303-1A</strain>
    </source>
</reference>
<reference key="9">
    <citation type="journal article" date="2007" name="J. Proteome Res.">
        <title>Large-scale phosphorylation analysis of alpha-factor-arrested Saccharomyces cerevisiae.</title>
        <authorList>
            <person name="Li X."/>
            <person name="Gerber S.A."/>
            <person name="Rudner A.D."/>
            <person name="Beausoleil S.A."/>
            <person name="Haas W."/>
            <person name="Villen J."/>
            <person name="Elias J.E."/>
            <person name="Gygi S.P."/>
        </authorList>
    </citation>
    <scope>IDENTIFICATION BY MASS SPECTROMETRY [LARGE SCALE ANALYSIS]</scope>
    <source>
        <strain>ADR376</strain>
    </source>
</reference>
<reference key="10">
    <citation type="journal article" date="2009" name="Science">
        <title>Global analysis of Cdk1 substrate phosphorylation sites provides insights into evolution.</title>
        <authorList>
            <person name="Holt L.J."/>
            <person name="Tuch B.B."/>
            <person name="Villen J."/>
            <person name="Johnson A.D."/>
            <person name="Gygi S.P."/>
            <person name="Morgan D.O."/>
        </authorList>
    </citation>
    <scope>PHOSPHORYLATION [LARGE SCALE ANALYSIS] AT THR-12; SER-26; SER-31; SER-35; SER-37 AND SER-46</scope>
    <scope>IDENTIFICATION BY MASS SPECTROMETRY [LARGE SCALE ANALYSIS]</scope>
</reference>
<reference key="11">
    <citation type="journal article" date="2012" name="Proteomics">
        <title>Sites of ubiquitin attachment in Saccharomyces cerevisiae.</title>
        <authorList>
            <person name="Starita L.M."/>
            <person name="Lo R.S."/>
            <person name="Eng J.K."/>
            <person name="von Haller P.D."/>
            <person name="Fields S."/>
        </authorList>
    </citation>
    <scope>UBIQUITINATION [LARGE SCALE ANALYSIS] AT LYS-573</scope>
    <scope>IDENTIFICATION BY MASS SPECTROMETRY [LARGE SCALE ANALYSIS]</scope>
</reference>
<comment type="function">
    <text evidence="3 4">Major transporter for myo-inositol.</text>
</comment>
<comment type="catalytic activity">
    <reaction evidence="6 7">
        <text>myo-inositol(out) + H(+)(out) = myo-inositol(in) + H(+)(in)</text>
        <dbReference type="Rhea" id="RHEA:60364"/>
        <dbReference type="ChEBI" id="CHEBI:15378"/>
        <dbReference type="ChEBI" id="CHEBI:17268"/>
    </reaction>
</comment>
<comment type="subcellular location">
    <subcellularLocation>
        <location evidence="3">Cell membrane</location>
        <topology evidence="1">Multi-pass membrane protein</topology>
    </subcellularLocation>
    <text evidence="3">Localizes to the cell membrane in conditions of low inositol.</text>
</comment>
<comment type="similarity">
    <text evidence="5">Belongs to the major facilitator superfamily. Sugar transporter (TC 2.A.1.1) family.</text>
</comment>